<protein>
    <recommendedName>
        <fullName evidence="1">ATP-dependent protease ATPase subunit HslU</fullName>
    </recommendedName>
    <alternativeName>
        <fullName evidence="1">Unfoldase HslU</fullName>
    </alternativeName>
</protein>
<proteinExistence type="inferred from homology"/>
<dbReference type="EMBL" id="AE017354">
    <property type="protein sequence ID" value="AAU26730.1"/>
    <property type="status" value="ALT_INIT"/>
    <property type="molecule type" value="Genomic_DNA"/>
</dbReference>
<dbReference type="RefSeq" id="YP_094677.1">
    <property type="nucleotide sequence ID" value="NC_002942.5"/>
</dbReference>
<dbReference type="SMR" id="Q5ZXU0"/>
<dbReference type="STRING" id="272624.lpg0641"/>
<dbReference type="PaxDb" id="272624-lpg0641"/>
<dbReference type="KEGG" id="lpn:lpg0641"/>
<dbReference type="PATRIC" id="fig|272624.6.peg.659"/>
<dbReference type="eggNOG" id="COG1220">
    <property type="taxonomic scope" value="Bacteria"/>
</dbReference>
<dbReference type="HOGENOM" id="CLU_033123_0_0_6"/>
<dbReference type="OrthoDB" id="9804062at2"/>
<dbReference type="Proteomes" id="UP000000609">
    <property type="component" value="Chromosome"/>
</dbReference>
<dbReference type="GO" id="GO:0009376">
    <property type="term" value="C:HslUV protease complex"/>
    <property type="evidence" value="ECO:0007669"/>
    <property type="project" value="UniProtKB-UniRule"/>
</dbReference>
<dbReference type="GO" id="GO:0005524">
    <property type="term" value="F:ATP binding"/>
    <property type="evidence" value="ECO:0007669"/>
    <property type="project" value="UniProtKB-UniRule"/>
</dbReference>
<dbReference type="GO" id="GO:0016887">
    <property type="term" value="F:ATP hydrolysis activity"/>
    <property type="evidence" value="ECO:0007669"/>
    <property type="project" value="InterPro"/>
</dbReference>
<dbReference type="GO" id="GO:0008233">
    <property type="term" value="F:peptidase activity"/>
    <property type="evidence" value="ECO:0007669"/>
    <property type="project" value="InterPro"/>
</dbReference>
<dbReference type="GO" id="GO:0036402">
    <property type="term" value="F:proteasome-activating activity"/>
    <property type="evidence" value="ECO:0007669"/>
    <property type="project" value="UniProtKB-UniRule"/>
</dbReference>
<dbReference type="GO" id="GO:0043335">
    <property type="term" value="P:protein unfolding"/>
    <property type="evidence" value="ECO:0007669"/>
    <property type="project" value="UniProtKB-UniRule"/>
</dbReference>
<dbReference type="GO" id="GO:0051603">
    <property type="term" value="P:proteolysis involved in protein catabolic process"/>
    <property type="evidence" value="ECO:0007669"/>
    <property type="project" value="TreeGrafter"/>
</dbReference>
<dbReference type="CDD" id="cd19498">
    <property type="entry name" value="RecA-like_HslU"/>
    <property type="match status" value="1"/>
</dbReference>
<dbReference type="FunFam" id="3.40.50.300:FF:000213">
    <property type="entry name" value="ATP-dependent protease ATPase subunit HslU"/>
    <property type="match status" value="1"/>
</dbReference>
<dbReference type="FunFam" id="3.40.50.300:FF:000220">
    <property type="entry name" value="ATP-dependent protease ATPase subunit HslU"/>
    <property type="match status" value="1"/>
</dbReference>
<dbReference type="Gene3D" id="1.10.8.60">
    <property type="match status" value="1"/>
</dbReference>
<dbReference type="Gene3D" id="3.40.50.300">
    <property type="entry name" value="P-loop containing nucleotide triphosphate hydrolases"/>
    <property type="match status" value="2"/>
</dbReference>
<dbReference type="HAMAP" id="MF_00249">
    <property type="entry name" value="HslU"/>
    <property type="match status" value="1"/>
</dbReference>
<dbReference type="InterPro" id="IPR003593">
    <property type="entry name" value="AAA+_ATPase"/>
</dbReference>
<dbReference type="InterPro" id="IPR050052">
    <property type="entry name" value="ATP-dep_Clp_protease_ClpX"/>
</dbReference>
<dbReference type="InterPro" id="IPR003959">
    <property type="entry name" value="ATPase_AAA_core"/>
</dbReference>
<dbReference type="InterPro" id="IPR019489">
    <property type="entry name" value="Clp_ATPase_C"/>
</dbReference>
<dbReference type="InterPro" id="IPR004491">
    <property type="entry name" value="HslU"/>
</dbReference>
<dbReference type="InterPro" id="IPR027417">
    <property type="entry name" value="P-loop_NTPase"/>
</dbReference>
<dbReference type="NCBIfam" id="TIGR00390">
    <property type="entry name" value="hslU"/>
    <property type="match status" value="1"/>
</dbReference>
<dbReference type="NCBIfam" id="NF003544">
    <property type="entry name" value="PRK05201.1"/>
    <property type="match status" value="1"/>
</dbReference>
<dbReference type="PANTHER" id="PTHR48102">
    <property type="entry name" value="ATP-DEPENDENT CLP PROTEASE ATP-BINDING SUBUNIT CLPX-LIKE, MITOCHONDRIAL-RELATED"/>
    <property type="match status" value="1"/>
</dbReference>
<dbReference type="PANTHER" id="PTHR48102:SF3">
    <property type="entry name" value="ATP-DEPENDENT PROTEASE ATPASE SUBUNIT HSLU"/>
    <property type="match status" value="1"/>
</dbReference>
<dbReference type="Pfam" id="PF00004">
    <property type="entry name" value="AAA"/>
    <property type="match status" value="1"/>
</dbReference>
<dbReference type="Pfam" id="PF07724">
    <property type="entry name" value="AAA_2"/>
    <property type="match status" value="1"/>
</dbReference>
<dbReference type="SMART" id="SM00382">
    <property type="entry name" value="AAA"/>
    <property type="match status" value="1"/>
</dbReference>
<dbReference type="SMART" id="SM01086">
    <property type="entry name" value="ClpB_D2-small"/>
    <property type="match status" value="1"/>
</dbReference>
<dbReference type="SUPFAM" id="SSF52540">
    <property type="entry name" value="P-loop containing nucleoside triphosphate hydrolases"/>
    <property type="match status" value="1"/>
</dbReference>
<reference key="1">
    <citation type="journal article" date="2004" name="Science">
        <title>The genomic sequence of the accidental pathogen Legionella pneumophila.</title>
        <authorList>
            <person name="Chien M."/>
            <person name="Morozova I."/>
            <person name="Shi S."/>
            <person name="Sheng H."/>
            <person name="Chen J."/>
            <person name="Gomez S.M."/>
            <person name="Asamani G."/>
            <person name="Hill K."/>
            <person name="Nuara J."/>
            <person name="Feder M."/>
            <person name="Rineer J."/>
            <person name="Greenberg J.J."/>
            <person name="Steshenko V."/>
            <person name="Park S.H."/>
            <person name="Zhao B."/>
            <person name="Teplitskaya E."/>
            <person name="Edwards J.R."/>
            <person name="Pampou S."/>
            <person name="Georghiou A."/>
            <person name="Chou I.-C."/>
            <person name="Iannuccilli W."/>
            <person name="Ulz M.E."/>
            <person name="Kim D.H."/>
            <person name="Geringer-Sameth A."/>
            <person name="Goldsberry C."/>
            <person name="Morozov P."/>
            <person name="Fischer S.G."/>
            <person name="Segal G."/>
            <person name="Qu X."/>
            <person name="Rzhetsky A."/>
            <person name="Zhang P."/>
            <person name="Cayanis E."/>
            <person name="De Jong P.J."/>
            <person name="Ju J."/>
            <person name="Kalachikov S."/>
            <person name="Shuman H.A."/>
            <person name="Russo J.J."/>
        </authorList>
    </citation>
    <scope>NUCLEOTIDE SEQUENCE [LARGE SCALE GENOMIC DNA]</scope>
    <source>
        <strain>Philadelphia 1 / ATCC 33152 / DSM 7513</strain>
    </source>
</reference>
<evidence type="ECO:0000255" key="1">
    <source>
        <dbReference type="HAMAP-Rule" id="MF_00249"/>
    </source>
</evidence>
<evidence type="ECO:0000305" key="2"/>
<feature type="chain" id="PRO_0000160516" description="ATP-dependent protease ATPase subunit HslU">
    <location>
        <begin position="1"/>
        <end position="441"/>
    </location>
</feature>
<feature type="binding site" evidence="1">
    <location>
        <position position="17"/>
    </location>
    <ligand>
        <name>ATP</name>
        <dbReference type="ChEBI" id="CHEBI:30616"/>
    </ligand>
</feature>
<feature type="binding site" evidence="1">
    <location>
        <begin position="60"/>
        <end position="65"/>
    </location>
    <ligand>
        <name>ATP</name>
        <dbReference type="ChEBI" id="CHEBI:30616"/>
    </ligand>
</feature>
<feature type="binding site" evidence="1">
    <location>
        <position position="253"/>
    </location>
    <ligand>
        <name>ATP</name>
        <dbReference type="ChEBI" id="CHEBI:30616"/>
    </ligand>
</feature>
<feature type="binding site" evidence="1">
    <location>
        <position position="319"/>
    </location>
    <ligand>
        <name>ATP</name>
        <dbReference type="ChEBI" id="CHEBI:30616"/>
    </ligand>
</feature>
<feature type="binding site" evidence="1">
    <location>
        <position position="391"/>
    </location>
    <ligand>
        <name>ATP</name>
        <dbReference type="ChEBI" id="CHEBI:30616"/>
    </ligand>
</feature>
<sequence length="441" mass="49425">MVMTPREIVQELDKHIIGQDDAKRAVAIALRNRWRRMKIKDPVLRNEIMPKNILMIGPTGVGKTEIARRLANLAKAPFIKVEATKFTEVGYVGRDVDSIIRDLTDMAIKQEREFAMKKVEHLAEDAAEERILDVLLPPARGTLTPGEKNTTARQVFRKQLREGELNDNEIEIEVAATPVGIEIMAPPGMEEMTSQLQSMFQQVGSYRTKTRKMTVAKAMKILREEEAAKLINEEDIKLKAIESVEQNGIVFIDELDKIAKRSDTVSGGDVSREGVQRDLLPLVEGTTVSTKYGMVKSDHILFIASGAFHVAKPSDLIAELQGRLPIRVELSALSVEDFVRILTEPSASLTLQYSALMETEGLTLTFDETGIRRIAEVAWQVNERTENIGARRLYTVMERLLEVVSFEATDKAGETVHVDKAYVDKNLGQLIADEDLARYIL</sequence>
<keyword id="KW-0067">ATP-binding</keyword>
<keyword id="KW-0143">Chaperone</keyword>
<keyword id="KW-0963">Cytoplasm</keyword>
<keyword id="KW-0547">Nucleotide-binding</keyword>
<keyword id="KW-1185">Reference proteome</keyword>
<gene>
    <name evidence="1" type="primary">hslU</name>
    <name type="ordered locus">lpg0641</name>
</gene>
<organism>
    <name type="scientific">Legionella pneumophila subsp. pneumophila (strain Philadelphia 1 / ATCC 33152 / DSM 7513)</name>
    <dbReference type="NCBI Taxonomy" id="272624"/>
    <lineage>
        <taxon>Bacteria</taxon>
        <taxon>Pseudomonadati</taxon>
        <taxon>Pseudomonadota</taxon>
        <taxon>Gammaproteobacteria</taxon>
        <taxon>Legionellales</taxon>
        <taxon>Legionellaceae</taxon>
        <taxon>Legionella</taxon>
    </lineage>
</organism>
<accession>Q5ZXU0</accession>
<comment type="function">
    <text evidence="1">ATPase subunit of a proteasome-like degradation complex; this subunit has chaperone activity. The binding of ATP and its subsequent hydrolysis by HslU are essential for unfolding of protein substrates subsequently hydrolyzed by HslV. HslU recognizes the N-terminal part of its protein substrates and unfolds these before they are guided to HslV for hydrolysis.</text>
</comment>
<comment type="subunit">
    <text evidence="1">A double ring-shaped homohexamer of HslV is capped on each side by a ring-shaped HslU homohexamer. The assembly of the HslU/HslV complex is dependent on binding of ATP.</text>
</comment>
<comment type="subcellular location">
    <subcellularLocation>
        <location evidence="1">Cytoplasm</location>
    </subcellularLocation>
</comment>
<comment type="similarity">
    <text evidence="1">Belongs to the ClpX chaperone family. HslU subfamily.</text>
</comment>
<comment type="sequence caution" evidence="2">
    <conflict type="erroneous initiation">
        <sequence resource="EMBL-CDS" id="AAU26730"/>
    </conflict>
</comment>
<name>HSLU_LEGPH</name>